<accession>C5CQ86</accession>
<gene>
    <name evidence="1" type="primary">rpsH</name>
    <name type="ordered locus">Vapar_5056</name>
</gene>
<feature type="chain" id="PRO_1000214276" description="Small ribosomal subunit protein uS8">
    <location>
        <begin position="1"/>
        <end position="131"/>
    </location>
</feature>
<dbReference type="EMBL" id="CP001635">
    <property type="protein sequence ID" value="ACS21658.1"/>
    <property type="molecule type" value="Genomic_DNA"/>
</dbReference>
<dbReference type="SMR" id="C5CQ86"/>
<dbReference type="STRING" id="543728.Vapar_5056"/>
<dbReference type="KEGG" id="vap:Vapar_5056"/>
<dbReference type="eggNOG" id="COG0096">
    <property type="taxonomic scope" value="Bacteria"/>
</dbReference>
<dbReference type="HOGENOM" id="CLU_098428_0_0_4"/>
<dbReference type="OrthoDB" id="9802617at2"/>
<dbReference type="GO" id="GO:1990904">
    <property type="term" value="C:ribonucleoprotein complex"/>
    <property type="evidence" value="ECO:0007669"/>
    <property type="project" value="UniProtKB-KW"/>
</dbReference>
<dbReference type="GO" id="GO:0005840">
    <property type="term" value="C:ribosome"/>
    <property type="evidence" value="ECO:0007669"/>
    <property type="project" value="UniProtKB-KW"/>
</dbReference>
<dbReference type="GO" id="GO:0019843">
    <property type="term" value="F:rRNA binding"/>
    <property type="evidence" value="ECO:0007669"/>
    <property type="project" value="UniProtKB-UniRule"/>
</dbReference>
<dbReference type="GO" id="GO:0003735">
    <property type="term" value="F:structural constituent of ribosome"/>
    <property type="evidence" value="ECO:0007669"/>
    <property type="project" value="InterPro"/>
</dbReference>
<dbReference type="GO" id="GO:0006412">
    <property type="term" value="P:translation"/>
    <property type="evidence" value="ECO:0007669"/>
    <property type="project" value="UniProtKB-UniRule"/>
</dbReference>
<dbReference type="FunFam" id="3.30.1370.30:FF:000002">
    <property type="entry name" value="30S ribosomal protein S8"/>
    <property type="match status" value="1"/>
</dbReference>
<dbReference type="FunFam" id="3.30.1490.10:FF:000001">
    <property type="entry name" value="30S ribosomal protein S8"/>
    <property type="match status" value="1"/>
</dbReference>
<dbReference type="Gene3D" id="3.30.1370.30">
    <property type="match status" value="1"/>
</dbReference>
<dbReference type="Gene3D" id="3.30.1490.10">
    <property type="match status" value="1"/>
</dbReference>
<dbReference type="HAMAP" id="MF_01302_B">
    <property type="entry name" value="Ribosomal_uS8_B"/>
    <property type="match status" value="1"/>
</dbReference>
<dbReference type="InterPro" id="IPR000630">
    <property type="entry name" value="Ribosomal_uS8"/>
</dbReference>
<dbReference type="InterPro" id="IPR047863">
    <property type="entry name" value="Ribosomal_uS8_CS"/>
</dbReference>
<dbReference type="InterPro" id="IPR035987">
    <property type="entry name" value="Ribosomal_uS8_sf"/>
</dbReference>
<dbReference type="NCBIfam" id="NF001109">
    <property type="entry name" value="PRK00136.1"/>
    <property type="match status" value="1"/>
</dbReference>
<dbReference type="PANTHER" id="PTHR11758">
    <property type="entry name" value="40S RIBOSOMAL PROTEIN S15A"/>
    <property type="match status" value="1"/>
</dbReference>
<dbReference type="Pfam" id="PF00410">
    <property type="entry name" value="Ribosomal_S8"/>
    <property type="match status" value="1"/>
</dbReference>
<dbReference type="SUPFAM" id="SSF56047">
    <property type="entry name" value="Ribosomal protein S8"/>
    <property type="match status" value="1"/>
</dbReference>
<dbReference type="PROSITE" id="PS00053">
    <property type="entry name" value="RIBOSOMAL_S8"/>
    <property type="match status" value="1"/>
</dbReference>
<reference key="1">
    <citation type="journal article" date="2011" name="J. Bacteriol.">
        <title>Complete genome sequence of the metabolically versatile plant growth-promoting endophyte, Variovorax paradoxus S110.</title>
        <authorList>
            <person name="Han J.I."/>
            <person name="Choi H.K."/>
            <person name="Lee S.W."/>
            <person name="Orwin P.M."/>
            <person name="Kim J."/>
            <person name="Laroe S.L."/>
            <person name="Kim T.G."/>
            <person name="O'Neil J."/>
            <person name="Leadbetter J.R."/>
            <person name="Lee S.Y."/>
            <person name="Hur C.G."/>
            <person name="Spain J.C."/>
            <person name="Ovchinnikova G."/>
            <person name="Goodwin L."/>
            <person name="Han C."/>
        </authorList>
    </citation>
    <scope>NUCLEOTIDE SEQUENCE [LARGE SCALE GENOMIC DNA]</scope>
    <source>
        <strain>S110</strain>
    </source>
</reference>
<name>RS8_VARPS</name>
<organism>
    <name type="scientific">Variovorax paradoxus (strain S110)</name>
    <dbReference type="NCBI Taxonomy" id="543728"/>
    <lineage>
        <taxon>Bacteria</taxon>
        <taxon>Pseudomonadati</taxon>
        <taxon>Pseudomonadota</taxon>
        <taxon>Betaproteobacteria</taxon>
        <taxon>Burkholderiales</taxon>
        <taxon>Comamonadaceae</taxon>
        <taxon>Variovorax</taxon>
    </lineage>
</organism>
<sequence length="131" mass="14136">MSMSDPIADLLTRIRNAQMVAKPTVSVPSSKVKIAISQVLKDEGYIDGFQVKTEDGKTELVITLKYYAGRPVIERIERVSRPGLRVYKASASIPQVQNGLGVAIVTTPKGVMTDRKARATGVGGEVLCYVA</sequence>
<protein>
    <recommendedName>
        <fullName evidence="1">Small ribosomal subunit protein uS8</fullName>
    </recommendedName>
    <alternativeName>
        <fullName evidence="2">30S ribosomal protein S8</fullName>
    </alternativeName>
</protein>
<comment type="function">
    <text evidence="1">One of the primary rRNA binding proteins, it binds directly to 16S rRNA central domain where it helps coordinate assembly of the platform of the 30S subunit.</text>
</comment>
<comment type="subunit">
    <text evidence="1">Part of the 30S ribosomal subunit. Contacts proteins S5 and S12.</text>
</comment>
<comment type="similarity">
    <text evidence="1">Belongs to the universal ribosomal protein uS8 family.</text>
</comment>
<proteinExistence type="inferred from homology"/>
<keyword id="KW-0687">Ribonucleoprotein</keyword>
<keyword id="KW-0689">Ribosomal protein</keyword>
<keyword id="KW-0694">RNA-binding</keyword>
<keyword id="KW-0699">rRNA-binding</keyword>
<evidence type="ECO:0000255" key="1">
    <source>
        <dbReference type="HAMAP-Rule" id="MF_01302"/>
    </source>
</evidence>
<evidence type="ECO:0000305" key="2"/>